<feature type="chain" id="PRO_1000199960" description="Endoribonuclease YbeY">
    <location>
        <begin position="1"/>
        <end position="157"/>
    </location>
</feature>
<feature type="binding site" evidence="1">
    <location>
        <position position="114"/>
    </location>
    <ligand>
        <name>Zn(2+)</name>
        <dbReference type="ChEBI" id="CHEBI:29105"/>
        <note>catalytic</note>
    </ligand>
</feature>
<feature type="binding site" evidence="1">
    <location>
        <position position="118"/>
    </location>
    <ligand>
        <name>Zn(2+)</name>
        <dbReference type="ChEBI" id="CHEBI:29105"/>
        <note>catalytic</note>
    </ligand>
</feature>
<feature type="binding site" evidence="1">
    <location>
        <position position="124"/>
    </location>
    <ligand>
        <name>Zn(2+)</name>
        <dbReference type="ChEBI" id="CHEBI:29105"/>
        <note>catalytic</note>
    </ligand>
</feature>
<accession>B8GX09</accession>
<evidence type="ECO:0000255" key="1">
    <source>
        <dbReference type="HAMAP-Rule" id="MF_00009"/>
    </source>
</evidence>
<evidence type="ECO:0000305" key="2"/>
<reference key="1">
    <citation type="journal article" date="2010" name="J. Bacteriol.">
        <title>The genetic basis of laboratory adaptation in Caulobacter crescentus.</title>
        <authorList>
            <person name="Marks M.E."/>
            <person name="Castro-Rojas C.M."/>
            <person name="Teiling C."/>
            <person name="Du L."/>
            <person name="Kapatral V."/>
            <person name="Walunas T.L."/>
            <person name="Crosson S."/>
        </authorList>
    </citation>
    <scope>NUCLEOTIDE SEQUENCE [LARGE SCALE GENOMIC DNA]</scope>
    <source>
        <strain>NA1000 / CB15N</strain>
    </source>
</reference>
<sequence length="157" mass="17193">MTITVDIEIEDEAWTTAEADAEALVWRAAQAVLDAHEDIEGQGIVILLTDDDSVQALNRDFRKKDYATNVLSFPSPPNPEGQIGDIALAYGVCAREAAEQGKPLAHHLQHLVAHGVLHLLGYDHERDDEAEAMEALEREILAGLDVPDPYASDEEGR</sequence>
<dbReference type="EC" id="3.1.-.-" evidence="1"/>
<dbReference type="EMBL" id="CP001340">
    <property type="protein sequence ID" value="ACL93519.3"/>
    <property type="status" value="ALT_INIT"/>
    <property type="molecule type" value="Genomic_DNA"/>
</dbReference>
<dbReference type="RefSeq" id="YP_002515427.3">
    <property type="nucleotide sequence ID" value="NC_011916.1"/>
</dbReference>
<dbReference type="SMR" id="B8GX09"/>
<dbReference type="GeneID" id="7332142"/>
<dbReference type="KEGG" id="ccs:CCNA_00052"/>
<dbReference type="PATRIC" id="fig|565050.3.peg.52"/>
<dbReference type="HOGENOM" id="CLU_106710_0_1_5"/>
<dbReference type="OrthoDB" id="9807740at2"/>
<dbReference type="PhylomeDB" id="B8GX09"/>
<dbReference type="Proteomes" id="UP000001364">
    <property type="component" value="Chromosome"/>
</dbReference>
<dbReference type="GO" id="GO:0005737">
    <property type="term" value="C:cytoplasm"/>
    <property type="evidence" value="ECO:0007669"/>
    <property type="project" value="UniProtKB-SubCell"/>
</dbReference>
<dbReference type="GO" id="GO:0004222">
    <property type="term" value="F:metalloendopeptidase activity"/>
    <property type="evidence" value="ECO:0007669"/>
    <property type="project" value="InterPro"/>
</dbReference>
<dbReference type="GO" id="GO:0004521">
    <property type="term" value="F:RNA endonuclease activity"/>
    <property type="evidence" value="ECO:0007669"/>
    <property type="project" value="UniProtKB-UniRule"/>
</dbReference>
<dbReference type="GO" id="GO:0008270">
    <property type="term" value="F:zinc ion binding"/>
    <property type="evidence" value="ECO:0007669"/>
    <property type="project" value="UniProtKB-UniRule"/>
</dbReference>
<dbReference type="GO" id="GO:0006364">
    <property type="term" value="P:rRNA processing"/>
    <property type="evidence" value="ECO:0007669"/>
    <property type="project" value="UniProtKB-UniRule"/>
</dbReference>
<dbReference type="Gene3D" id="3.40.390.30">
    <property type="entry name" value="Metalloproteases ('zincins'), catalytic domain"/>
    <property type="match status" value="1"/>
</dbReference>
<dbReference type="HAMAP" id="MF_00009">
    <property type="entry name" value="Endoribonucl_YbeY"/>
    <property type="match status" value="1"/>
</dbReference>
<dbReference type="InterPro" id="IPR023091">
    <property type="entry name" value="MetalPrtase_cat_dom_sf_prd"/>
</dbReference>
<dbReference type="InterPro" id="IPR002036">
    <property type="entry name" value="YbeY"/>
</dbReference>
<dbReference type="InterPro" id="IPR020549">
    <property type="entry name" value="YbeY_CS"/>
</dbReference>
<dbReference type="NCBIfam" id="TIGR00043">
    <property type="entry name" value="rRNA maturation RNase YbeY"/>
    <property type="match status" value="1"/>
</dbReference>
<dbReference type="PANTHER" id="PTHR46986">
    <property type="entry name" value="ENDORIBONUCLEASE YBEY, CHLOROPLASTIC"/>
    <property type="match status" value="1"/>
</dbReference>
<dbReference type="PANTHER" id="PTHR46986:SF1">
    <property type="entry name" value="ENDORIBONUCLEASE YBEY, CHLOROPLASTIC"/>
    <property type="match status" value="1"/>
</dbReference>
<dbReference type="Pfam" id="PF02130">
    <property type="entry name" value="YbeY"/>
    <property type="match status" value="1"/>
</dbReference>
<dbReference type="SUPFAM" id="SSF55486">
    <property type="entry name" value="Metalloproteases ('zincins'), catalytic domain"/>
    <property type="match status" value="1"/>
</dbReference>
<dbReference type="PROSITE" id="PS01306">
    <property type="entry name" value="UPF0054"/>
    <property type="match status" value="1"/>
</dbReference>
<organism>
    <name type="scientific">Caulobacter vibrioides (strain NA1000 / CB15N)</name>
    <name type="common">Caulobacter crescentus</name>
    <dbReference type="NCBI Taxonomy" id="565050"/>
    <lineage>
        <taxon>Bacteria</taxon>
        <taxon>Pseudomonadati</taxon>
        <taxon>Pseudomonadota</taxon>
        <taxon>Alphaproteobacteria</taxon>
        <taxon>Caulobacterales</taxon>
        <taxon>Caulobacteraceae</taxon>
        <taxon>Caulobacter</taxon>
    </lineage>
</organism>
<gene>
    <name evidence="1" type="primary">ybeY</name>
    <name type="ordered locus">CCNA_00052</name>
</gene>
<name>YBEY_CAUVN</name>
<keyword id="KW-0963">Cytoplasm</keyword>
<keyword id="KW-0255">Endonuclease</keyword>
<keyword id="KW-0378">Hydrolase</keyword>
<keyword id="KW-0479">Metal-binding</keyword>
<keyword id="KW-0540">Nuclease</keyword>
<keyword id="KW-1185">Reference proteome</keyword>
<keyword id="KW-0690">Ribosome biogenesis</keyword>
<keyword id="KW-0698">rRNA processing</keyword>
<keyword id="KW-0862">Zinc</keyword>
<protein>
    <recommendedName>
        <fullName evidence="1">Endoribonuclease YbeY</fullName>
        <ecNumber evidence="1">3.1.-.-</ecNumber>
    </recommendedName>
</protein>
<proteinExistence type="inferred from homology"/>
<comment type="function">
    <text evidence="1">Single strand-specific metallo-endoribonuclease involved in late-stage 70S ribosome quality control and in maturation of the 3' terminus of the 16S rRNA.</text>
</comment>
<comment type="cofactor">
    <cofactor evidence="1">
        <name>Zn(2+)</name>
        <dbReference type="ChEBI" id="CHEBI:29105"/>
    </cofactor>
    <text evidence="1">Binds 1 zinc ion.</text>
</comment>
<comment type="subcellular location">
    <subcellularLocation>
        <location evidence="1">Cytoplasm</location>
    </subcellularLocation>
</comment>
<comment type="similarity">
    <text evidence="1">Belongs to the endoribonuclease YbeY family.</text>
</comment>
<comment type="sequence caution" evidence="2">
    <conflict type="erroneous initiation">
        <sequence resource="EMBL-CDS" id="ACL93519"/>
    </conflict>
    <text>Truncated N-terminus.</text>
</comment>